<name>CDSA_THEMA</name>
<proteinExistence type="evidence at protein level"/>
<keyword id="KW-0002">3D-structure</keyword>
<keyword id="KW-1003">Cell membrane</keyword>
<keyword id="KW-0444">Lipid biosynthesis</keyword>
<keyword id="KW-0443">Lipid metabolism</keyword>
<keyword id="KW-0472">Membrane</keyword>
<keyword id="KW-0548">Nucleotidyltransferase</keyword>
<keyword id="KW-0594">Phospholipid biosynthesis</keyword>
<keyword id="KW-1208">Phospholipid metabolism</keyword>
<keyword id="KW-1185">Reference proteome</keyword>
<keyword id="KW-0808">Transferase</keyword>
<keyword id="KW-0812">Transmembrane</keyword>
<keyword id="KW-1133">Transmembrane helix</keyword>
<feature type="chain" id="PRO_0000090758" description="Phosphatidate cytidylyltransferase">
    <location>
        <begin position="1"/>
        <end position="270"/>
    </location>
</feature>
<feature type="transmembrane region" description="Helical" evidence="2">
    <location>
        <begin position="17"/>
        <end position="37"/>
    </location>
</feature>
<feature type="transmembrane region" description="Helical" evidence="2">
    <location>
        <begin position="55"/>
        <end position="75"/>
    </location>
</feature>
<feature type="transmembrane region" description="Helical" evidence="2">
    <location>
        <begin position="81"/>
        <end position="101"/>
    </location>
</feature>
<feature type="transmembrane region" description="Helical" evidence="2">
    <location>
        <begin position="104"/>
        <end position="124"/>
    </location>
</feature>
<feature type="transmembrane region" description="Helical" evidence="2">
    <location>
        <begin position="129"/>
        <end position="149"/>
    </location>
</feature>
<feature type="transmembrane region" description="Helical" evidence="2">
    <location>
        <begin position="170"/>
        <end position="190"/>
    </location>
</feature>
<feature type="transmembrane region" description="Helical" evidence="2">
    <location>
        <begin position="193"/>
        <end position="213"/>
    </location>
</feature>
<feature type="transmembrane region" description="Helical" evidence="2">
    <location>
        <begin position="248"/>
        <end position="268"/>
    </location>
</feature>
<feature type="helix" evidence="5">
    <location>
        <begin position="5"/>
        <end position="9"/>
    </location>
</feature>
<feature type="helix" evidence="4">
    <location>
        <begin position="10"/>
        <end position="20"/>
    </location>
</feature>
<feature type="helix" evidence="4">
    <location>
        <begin position="25"/>
        <end position="45"/>
    </location>
</feature>
<feature type="helix" evidence="4">
    <location>
        <begin position="51"/>
        <end position="69"/>
    </location>
</feature>
<feature type="turn" evidence="4">
    <location>
        <begin position="70"/>
        <end position="72"/>
    </location>
</feature>
<feature type="strand" evidence="4">
    <location>
        <begin position="73"/>
        <end position="75"/>
    </location>
</feature>
<feature type="helix" evidence="4">
    <location>
        <begin position="76"/>
        <end position="93"/>
    </location>
</feature>
<feature type="helix" evidence="4">
    <location>
        <begin position="97"/>
        <end position="113"/>
    </location>
</feature>
<feature type="helix" evidence="4">
    <location>
        <begin position="115"/>
        <end position="118"/>
    </location>
</feature>
<feature type="helix" evidence="4">
    <location>
        <begin position="121"/>
        <end position="154"/>
    </location>
</feature>
<feature type="strand" evidence="4">
    <location>
        <begin position="162"/>
        <end position="164"/>
    </location>
</feature>
<feature type="helix" evidence="4">
    <location>
        <begin position="169"/>
        <end position="191"/>
    </location>
</feature>
<feature type="strand" evidence="5">
    <location>
        <begin position="193"/>
        <end position="195"/>
    </location>
</feature>
<feature type="strand" evidence="5">
    <location>
        <begin position="201"/>
        <end position="203"/>
    </location>
</feature>
<feature type="helix" evidence="4">
    <location>
        <begin position="204"/>
        <end position="229"/>
    </location>
</feature>
<feature type="strand" evidence="4">
    <location>
        <begin position="232"/>
        <end position="234"/>
    </location>
</feature>
<feature type="strand" evidence="4">
    <location>
        <begin position="239"/>
        <end position="242"/>
    </location>
</feature>
<feature type="helix" evidence="4">
    <location>
        <begin position="244"/>
        <end position="265"/>
    </location>
</feature>
<sequence>MDDLKTRVITASVVAPFVVLCFVSYESLIGLVSAILILAGYELITLEMKERDARFFYVILLALYPVLYGLVFEEPTQPLSILFITGVVFSLITDKDPSQVFKTVAAFSIALIYVTFFLSFFLPIYRDFGAANALLVLTSTWVFDSFAYFTGLKFGRTRISPRYSPRKSLEGVIGGFLGVVIYTFLYRLVVNDLLSVNVISFRTFLPFAATVAIMDTFGDIFESALKRHYGVKDSGKTLPGHGGMLDRIDGLLFVAPVSYIVFKILEGVVR</sequence>
<reference key="1">
    <citation type="journal article" date="1999" name="Nature">
        <title>Evidence for lateral gene transfer between Archaea and Bacteria from genome sequence of Thermotoga maritima.</title>
        <authorList>
            <person name="Nelson K.E."/>
            <person name="Clayton R.A."/>
            <person name="Gill S.R."/>
            <person name="Gwinn M.L."/>
            <person name="Dodson R.J."/>
            <person name="Haft D.H."/>
            <person name="Hickey E.K."/>
            <person name="Peterson J.D."/>
            <person name="Nelson W.C."/>
            <person name="Ketchum K.A."/>
            <person name="McDonald L.A."/>
            <person name="Utterback T.R."/>
            <person name="Malek J.A."/>
            <person name="Linher K.D."/>
            <person name="Garrett M.M."/>
            <person name="Stewart A.M."/>
            <person name="Cotton M.D."/>
            <person name="Pratt M.S."/>
            <person name="Phillips C.A."/>
            <person name="Richardson D.L."/>
            <person name="Heidelberg J.F."/>
            <person name="Sutton G.G."/>
            <person name="Fleischmann R.D."/>
            <person name="Eisen J.A."/>
            <person name="White O."/>
            <person name="Salzberg S.L."/>
            <person name="Smith H.O."/>
            <person name="Venter J.C."/>
            <person name="Fraser C.M."/>
        </authorList>
    </citation>
    <scope>NUCLEOTIDE SEQUENCE [LARGE SCALE GENOMIC DNA]</scope>
    <source>
        <strain>ATCC 43589 / DSM 3109 / JCM 10099 / NBRC 100826 / MSB8</strain>
    </source>
</reference>
<gene>
    <name type="primary">cdsA</name>
    <name type="ordered locus">TM_1397</name>
</gene>
<dbReference type="EC" id="2.7.7.41"/>
<dbReference type="EMBL" id="AE000512">
    <property type="protein sequence ID" value="AAD36468.1"/>
    <property type="molecule type" value="Genomic_DNA"/>
</dbReference>
<dbReference type="PIR" id="F72259">
    <property type="entry name" value="F72259"/>
</dbReference>
<dbReference type="RefSeq" id="NP_229198.1">
    <property type="nucleotide sequence ID" value="NC_000853.1"/>
</dbReference>
<dbReference type="RefSeq" id="WP_004081613.1">
    <property type="nucleotide sequence ID" value="NC_000853.1"/>
</dbReference>
<dbReference type="PDB" id="4Q2E">
    <property type="method" value="X-ray"/>
    <property type="resolution" value="3.40 A"/>
    <property type="chains" value="A/B=1-270"/>
</dbReference>
<dbReference type="PDB" id="4Q2G">
    <property type="method" value="X-ray"/>
    <property type="resolution" value="3.40 A"/>
    <property type="chains" value="A/B=1-270"/>
</dbReference>
<dbReference type="PDBsum" id="4Q2E"/>
<dbReference type="PDBsum" id="4Q2G"/>
<dbReference type="SMR" id="Q9X1B7"/>
<dbReference type="FunCoup" id="Q9X1B7">
    <property type="interactions" value="361"/>
</dbReference>
<dbReference type="STRING" id="243274.TM_1397"/>
<dbReference type="PaxDb" id="243274-THEMA_07330"/>
<dbReference type="EnsemblBacteria" id="AAD36468">
    <property type="protein sequence ID" value="AAD36468"/>
    <property type="gene ID" value="TM_1397"/>
</dbReference>
<dbReference type="KEGG" id="tma:TM1397"/>
<dbReference type="KEGG" id="tmi:THEMA_07330"/>
<dbReference type="KEGG" id="tmm:Tmari_1404"/>
<dbReference type="KEGG" id="tmw:THMA_1426"/>
<dbReference type="eggNOG" id="COG0575">
    <property type="taxonomic scope" value="Bacteria"/>
</dbReference>
<dbReference type="InParanoid" id="Q9X1B7"/>
<dbReference type="OrthoDB" id="9799199at2"/>
<dbReference type="UniPathway" id="UPA00557">
    <property type="reaction ID" value="UER00614"/>
</dbReference>
<dbReference type="EvolutionaryTrace" id="Q9X1B7"/>
<dbReference type="Proteomes" id="UP000008183">
    <property type="component" value="Chromosome"/>
</dbReference>
<dbReference type="GO" id="GO:0005886">
    <property type="term" value="C:plasma membrane"/>
    <property type="evidence" value="ECO:0000318"/>
    <property type="project" value="GO_Central"/>
</dbReference>
<dbReference type="GO" id="GO:0004605">
    <property type="term" value="F:phosphatidate cytidylyltransferase activity"/>
    <property type="evidence" value="ECO:0000318"/>
    <property type="project" value="GO_Central"/>
</dbReference>
<dbReference type="GO" id="GO:0016024">
    <property type="term" value="P:CDP-diacylglycerol biosynthetic process"/>
    <property type="evidence" value="ECO:0000318"/>
    <property type="project" value="GO_Central"/>
</dbReference>
<dbReference type="InterPro" id="IPR000374">
    <property type="entry name" value="PC_trans"/>
</dbReference>
<dbReference type="PANTHER" id="PTHR46382">
    <property type="entry name" value="PHOSPHATIDATE CYTIDYLYLTRANSFERASE"/>
    <property type="match status" value="1"/>
</dbReference>
<dbReference type="PANTHER" id="PTHR46382:SF1">
    <property type="entry name" value="PHOSPHATIDATE CYTIDYLYLTRANSFERASE"/>
    <property type="match status" value="1"/>
</dbReference>
<dbReference type="Pfam" id="PF01148">
    <property type="entry name" value="CTP_transf_1"/>
    <property type="match status" value="1"/>
</dbReference>
<dbReference type="PROSITE" id="PS01315">
    <property type="entry name" value="CDS"/>
    <property type="match status" value="1"/>
</dbReference>
<comment type="catalytic activity">
    <reaction>
        <text>a 1,2-diacyl-sn-glycero-3-phosphate + CTP + H(+) = a CDP-1,2-diacyl-sn-glycerol + diphosphate</text>
        <dbReference type="Rhea" id="RHEA:16229"/>
        <dbReference type="ChEBI" id="CHEBI:15378"/>
        <dbReference type="ChEBI" id="CHEBI:33019"/>
        <dbReference type="ChEBI" id="CHEBI:37563"/>
        <dbReference type="ChEBI" id="CHEBI:58332"/>
        <dbReference type="ChEBI" id="CHEBI:58608"/>
        <dbReference type="EC" id="2.7.7.41"/>
    </reaction>
</comment>
<comment type="pathway">
    <text>Phospholipid metabolism; CDP-diacylglycerol biosynthesis; CDP-diacylglycerol from sn-glycerol 3-phosphate: step 3/3.</text>
</comment>
<comment type="subcellular location">
    <subcellularLocation>
        <location evidence="1">Cell membrane</location>
        <topology evidence="1">Multi-pass membrane protein</topology>
    </subcellularLocation>
</comment>
<comment type="similarity">
    <text evidence="3">Belongs to the CDS family.</text>
</comment>
<organism>
    <name type="scientific">Thermotoga maritima (strain ATCC 43589 / DSM 3109 / JCM 10099 / NBRC 100826 / MSB8)</name>
    <dbReference type="NCBI Taxonomy" id="243274"/>
    <lineage>
        <taxon>Bacteria</taxon>
        <taxon>Thermotogati</taxon>
        <taxon>Thermotogota</taxon>
        <taxon>Thermotogae</taxon>
        <taxon>Thermotogales</taxon>
        <taxon>Thermotogaceae</taxon>
        <taxon>Thermotoga</taxon>
    </lineage>
</organism>
<protein>
    <recommendedName>
        <fullName>Phosphatidate cytidylyltransferase</fullName>
        <ecNumber>2.7.7.41</ecNumber>
    </recommendedName>
    <alternativeName>
        <fullName>CDP-DAG synthase</fullName>
    </alternativeName>
    <alternativeName>
        <fullName>CDP-DG synthase</fullName>
    </alternativeName>
    <alternativeName>
        <fullName>CDP-diacylglycerol synthase</fullName>
        <shortName>CDS</shortName>
    </alternativeName>
    <alternativeName>
        <fullName>CDP-diglyceride pyrophosphorylase</fullName>
    </alternativeName>
    <alternativeName>
        <fullName>CDP-diglyceride synthase</fullName>
    </alternativeName>
    <alternativeName>
        <fullName>CTP:phosphatidate cytidylyltransferase</fullName>
    </alternativeName>
</protein>
<evidence type="ECO:0000250" key="1"/>
<evidence type="ECO:0000255" key="2"/>
<evidence type="ECO:0000305" key="3"/>
<evidence type="ECO:0007829" key="4">
    <source>
        <dbReference type="PDB" id="4Q2E"/>
    </source>
</evidence>
<evidence type="ECO:0007829" key="5">
    <source>
        <dbReference type="PDB" id="4Q2G"/>
    </source>
</evidence>
<accession>Q9X1B7</accession>